<accession>Q131U9</accession>
<evidence type="ECO:0000255" key="1">
    <source>
        <dbReference type="HAMAP-Rule" id="MF_00222"/>
    </source>
</evidence>
<dbReference type="EC" id="1.1.1.25" evidence="1"/>
<dbReference type="EMBL" id="CP000283">
    <property type="protein sequence ID" value="ABE41140.1"/>
    <property type="molecule type" value="Genomic_DNA"/>
</dbReference>
<dbReference type="SMR" id="Q131U9"/>
<dbReference type="STRING" id="316057.RPD_3919"/>
<dbReference type="KEGG" id="rpd:RPD_3919"/>
<dbReference type="eggNOG" id="COG0169">
    <property type="taxonomic scope" value="Bacteria"/>
</dbReference>
<dbReference type="HOGENOM" id="CLU_044063_2_0_5"/>
<dbReference type="BioCyc" id="RPAL316057:RPD_RS19690-MONOMER"/>
<dbReference type="UniPathway" id="UPA00053">
    <property type="reaction ID" value="UER00087"/>
</dbReference>
<dbReference type="Proteomes" id="UP000001818">
    <property type="component" value="Chromosome"/>
</dbReference>
<dbReference type="GO" id="GO:0005829">
    <property type="term" value="C:cytosol"/>
    <property type="evidence" value="ECO:0007669"/>
    <property type="project" value="TreeGrafter"/>
</dbReference>
<dbReference type="GO" id="GO:0050661">
    <property type="term" value="F:NADP binding"/>
    <property type="evidence" value="ECO:0007669"/>
    <property type="project" value="InterPro"/>
</dbReference>
<dbReference type="GO" id="GO:0004764">
    <property type="term" value="F:shikimate 3-dehydrogenase (NADP+) activity"/>
    <property type="evidence" value="ECO:0007669"/>
    <property type="project" value="UniProtKB-UniRule"/>
</dbReference>
<dbReference type="GO" id="GO:0008652">
    <property type="term" value="P:amino acid biosynthetic process"/>
    <property type="evidence" value="ECO:0007669"/>
    <property type="project" value="UniProtKB-KW"/>
</dbReference>
<dbReference type="GO" id="GO:0009073">
    <property type="term" value="P:aromatic amino acid family biosynthetic process"/>
    <property type="evidence" value="ECO:0007669"/>
    <property type="project" value="UniProtKB-KW"/>
</dbReference>
<dbReference type="GO" id="GO:0009423">
    <property type="term" value="P:chorismate biosynthetic process"/>
    <property type="evidence" value="ECO:0007669"/>
    <property type="project" value="UniProtKB-UniRule"/>
</dbReference>
<dbReference type="GO" id="GO:0019632">
    <property type="term" value="P:shikimate metabolic process"/>
    <property type="evidence" value="ECO:0007669"/>
    <property type="project" value="InterPro"/>
</dbReference>
<dbReference type="CDD" id="cd01065">
    <property type="entry name" value="NAD_bind_Shikimate_DH"/>
    <property type="match status" value="1"/>
</dbReference>
<dbReference type="Gene3D" id="3.40.50.10860">
    <property type="entry name" value="Leucine Dehydrogenase, chain A, domain 1"/>
    <property type="match status" value="1"/>
</dbReference>
<dbReference type="Gene3D" id="3.40.50.720">
    <property type="entry name" value="NAD(P)-binding Rossmann-like Domain"/>
    <property type="match status" value="1"/>
</dbReference>
<dbReference type="HAMAP" id="MF_00222">
    <property type="entry name" value="Shikimate_DH_AroE"/>
    <property type="match status" value="1"/>
</dbReference>
<dbReference type="InterPro" id="IPR046346">
    <property type="entry name" value="Aminoacid_DH-like_N_sf"/>
</dbReference>
<dbReference type="InterPro" id="IPR036291">
    <property type="entry name" value="NAD(P)-bd_dom_sf"/>
</dbReference>
<dbReference type="InterPro" id="IPR041121">
    <property type="entry name" value="SDH_C"/>
</dbReference>
<dbReference type="InterPro" id="IPR011342">
    <property type="entry name" value="Shikimate_DH"/>
</dbReference>
<dbReference type="InterPro" id="IPR013708">
    <property type="entry name" value="Shikimate_DH-bd_N"/>
</dbReference>
<dbReference type="InterPro" id="IPR022893">
    <property type="entry name" value="Shikimate_DH_fam"/>
</dbReference>
<dbReference type="InterPro" id="IPR006151">
    <property type="entry name" value="Shikm_DH/Glu-tRNA_Rdtase"/>
</dbReference>
<dbReference type="NCBIfam" id="TIGR00507">
    <property type="entry name" value="aroE"/>
    <property type="match status" value="1"/>
</dbReference>
<dbReference type="NCBIfam" id="NF001312">
    <property type="entry name" value="PRK00258.1-4"/>
    <property type="match status" value="1"/>
</dbReference>
<dbReference type="PANTHER" id="PTHR21089:SF1">
    <property type="entry name" value="BIFUNCTIONAL 3-DEHYDROQUINATE DEHYDRATASE_SHIKIMATE DEHYDROGENASE, CHLOROPLASTIC"/>
    <property type="match status" value="1"/>
</dbReference>
<dbReference type="PANTHER" id="PTHR21089">
    <property type="entry name" value="SHIKIMATE DEHYDROGENASE"/>
    <property type="match status" value="1"/>
</dbReference>
<dbReference type="Pfam" id="PF18317">
    <property type="entry name" value="SDH_C"/>
    <property type="match status" value="1"/>
</dbReference>
<dbReference type="Pfam" id="PF01488">
    <property type="entry name" value="Shikimate_DH"/>
    <property type="match status" value="1"/>
</dbReference>
<dbReference type="Pfam" id="PF08501">
    <property type="entry name" value="Shikimate_dh_N"/>
    <property type="match status" value="1"/>
</dbReference>
<dbReference type="SUPFAM" id="SSF53223">
    <property type="entry name" value="Aminoacid dehydrogenase-like, N-terminal domain"/>
    <property type="match status" value="1"/>
</dbReference>
<dbReference type="SUPFAM" id="SSF51735">
    <property type="entry name" value="NAD(P)-binding Rossmann-fold domains"/>
    <property type="match status" value="1"/>
</dbReference>
<name>AROE_RHOPS</name>
<feature type="chain" id="PRO_0000325157" description="Shikimate dehydrogenase (NADP(+))">
    <location>
        <begin position="1"/>
        <end position="283"/>
    </location>
</feature>
<feature type="active site" description="Proton acceptor" evidence="1">
    <location>
        <position position="73"/>
    </location>
</feature>
<feature type="binding site" evidence="1">
    <location>
        <begin position="22"/>
        <end position="24"/>
    </location>
    <ligand>
        <name>shikimate</name>
        <dbReference type="ChEBI" id="CHEBI:36208"/>
    </ligand>
</feature>
<feature type="binding site" evidence="1">
    <location>
        <position position="69"/>
    </location>
    <ligand>
        <name>shikimate</name>
        <dbReference type="ChEBI" id="CHEBI:36208"/>
    </ligand>
</feature>
<feature type="binding site" evidence="1">
    <location>
        <position position="93"/>
    </location>
    <ligand>
        <name>shikimate</name>
        <dbReference type="ChEBI" id="CHEBI:36208"/>
    </ligand>
</feature>
<feature type="binding site" evidence="1">
    <location>
        <position position="108"/>
    </location>
    <ligand>
        <name>shikimate</name>
        <dbReference type="ChEBI" id="CHEBI:36208"/>
    </ligand>
</feature>
<feature type="binding site" evidence="1">
    <location>
        <begin position="133"/>
        <end position="137"/>
    </location>
    <ligand>
        <name>NADP(+)</name>
        <dbReference type="ChEBI" id="CHEBI:58349"/>
    </ligand>
</feature>
<feature type="binding site" evidence="1">
    <location>
        <position position="222"/>
    </location>
    <ligand>
        <name>NADP(+)</name>
        <dbReference type="ChEBI" id="CHEBI:58349"/>
    </ligand>
</feature>
<feature type="binding site" evidence="1">
    <location>
        <position position="224"/>
    </location>
    <ligand>
        <name>shikimate</name>
        <dbReference type="ChEBI" id="CHEBI:36208"/>
    </ligand>
</feature>
<feature type="binding site" evidence="1">
    <location>
        <position position="245"/>
    </location>
    <ligand>
        <name>NADP(+)</name>
        <dbReference type="ChEBI" id="CHEBI:58349"/>
    </ligand>
</feature>
<protein>
    <recommendedName>
        <fullName evidence="1">Shikimate dehydrogenase (NADP(+))</fullName>
        <shortName evidence="1">SDH</shortName>
        <ecNumber evidence="1">1.1.1.25</ecNumber>
    </recommendedName>
</protein>
<sequence length="283" mass="30200">MTQPTSQAHIAACLIGWPAAHSRSPLIHHYWLRKLGIEGGYSIESVPPEGFAEFVLHLKTHGYSGANVTIPHKERALQLTVPDQRACAVGAANTLYYDGSVLRSTNTDVEGFISNLDASAPGWDRTPHAVVLGAGGSSRAVVFGLLERGIQRIALANRSIERARALADLFGERVVPIAWTDAPAALPGAGLLVNTTSLGMKGQPSLDLDLEPLPADATVADLVYVPLETELLSEARARGLRTADGLGMLLHQAVRGFELWFGARPEVTSELRALVEADLVAHA</sequence>
<proteinExistence type="inferred from homology"/>
<organism>
    <name type="scientific">Rhodopseudomonas palustris (strain BisB5)</name>
    <dbReference type="NCBI Taxonomy" id="316057"/>
    <lineage>
        <taxon>Bacteria</taxon>
        <taxon>Pseudomonadati</taxon>
        <taxon>Pseudomonadota</taxon>
        <taxon>Alphaproteobacteria</taxon>
        <taxon>Hyphomicrobiales</taxon>
        <taxon>Nitrobacteraceae</taxon>
        <taxon>Rhodopseudomonas</taxon>
    </lineage>
</organism>
<reference key="1">
    <citation type="submission" date="2006-03" db="EMBL/GenBank/DDBJ databases">
        <title>Complete sequence of Rhodopseudomonas palustris BisB5.</title>
        <authorList>
            <consortium name="US DOE Joint Genome Institute"/>
            <person name="Copeland A."/>
            <person name="Lucas S."/>
            <person name="Lapidus A."/>
            <person name="Barry K."/>
            <person name="Detter J.C."/>
            <person name="Glavina del Rio T."/>
            <person name="Hammon N."/>
            <person name="Israni S."/>
            <person name="Dalin E."/>
            <person name="Tice H."/>
            <person name="Pitluck S."/>
            <person name="Chain P."/>
            <person name="Malfatti S."/>
            <person name="Shin M."/>
            <person name="Vergez L."/>
            <person name="Schmutz J."/>
            <person name="Larimer F."/>
            <person name="Land M."/>
            <person name="Hauser L."/>
            <person name="Pelletier D.A."/>
            <person name="Kyrpides N."/>
            <person name="Lykidis A."/>
            <person name="Oda Y."/>
            <person name="Harwood C.S."/>
            <person name="Richardson P."/>
        </authorList>
    </citation>
    <scope>NUCLEOTIDE SEQUENCE [LARGE SCALE GENOMIC DNA]</scope>
    <source>
        <strain>BisB5</strain>
    </source>
</reference>
<comment type="function">
    <text evidence="1">Involved in the biosynthesis of the chorismate, which leads to the biosynthesis of aromatic amino acids. Catalyzes the reversible NADPH linked reduction of 3-dehydroshikimate (DHSA) to yield shikimate (SA).</text>
</comment>
<comment type="catalytic activity">
    <reaction evidence="1">
        <text>shikimate + NADP(+) = 3-dehydroshikimate + NADPH + H(+)</text>
        <dbReference type="Rhea" id="RHEA:17737"/>
        <dbReference type="ChEBI" id="CHEBI:15378"/>
        <dbReference type="ChEBI" id="CHEBI:16630"/>
        <dbReference type="ChEBI" id="CHEBI:36208"/>
        <dbReference type="ChEBI" id="CHEBI:57783"/>
        <dbReference type="ChEBI" id="CHEBI:58349"/>
        <dbReference type="EC" id="1.1.1.25"/>
    </reaction>
</comment>
<comment type="pathway">
    <text evidence="1">Metabolic intermediate biosynthesis; chorismate biosynthesis; chorismate from D-erythrose 4-phosphate and phosphoenolpyruvate: step 4/7.</text>
</comment>
<comment type="subunit">
    <text evidence="1">Homodimer.</text>
</comment>
<comment type="similarity">
    <text evidence="1">Belongs to the shikimate dehydrogenase family.</text>
</comment>
<keyword id="KW-0028">Amino-acid biosynthesis</keyword>
<keyword id="KW-0057">Aromatic amino acid biosynthesis</keyword>
<keyword id="KW-0521">NADP</keyword>
<keyword id="KW-0560">Oxidoreductase</keyword>
<gene>
    <name evidence="1" type="primary">aroE</name>
    <name type="ordered locus">RPD_3919</name>
</gene>